<reference key="1">
    <citation type="submission" date="2009-01" db="EMBL/GenBank/DDBJ databases">
        <title>Complete sequence of chromosome of Arthrobacter chlorophenolicus A6.</title>
        <authorList>
            <consortium name="US DOE Joint Genome Institute"/>
            <person name="Lucas S."/>
            <person name="Copeland A."/>
            <person name="Lapidus A."/>
            <person name="Glavina del Rio T."/>
            <person name="Tice H."/>
            <person name="Bruce D."/>
            <person name="Goodwin L."/>
            <person name="Pitluck S."/>
            <person name="Goltsman E."/>
            <person name="Clum A."/>
            <person name="Larimer F."/>
            <person name="Land M."/>
            <person name="Hauser L."/>
            <person name="Kyrpides N."/>
            <person name="Mikhailova N."/>
            <person name="Jansson J."/>
            <person name="Richardson P."/>
        </authorList>
    </citation>
    <scope>NUCLEOTIDE SEQUENCE [LARGE SCALE GENOMIC DNA]</scope>
    <source>
        <strain>ATCC 700700 / DSM 12829 / CIP 107037 / JCM 12360 / KCTC 9906 / NCIMB 13794 / A6</strain>
    </source>
</reference>
<protein>
    <recommendedName>
        <fullName evidence="1">UvrABC system protein B</fullName>
        <shortName evidence="1">Protein UvrB</shortName>
    </recommendedName>
    <alternativeName>
        <fullName evidence="1">Excinuclease ABC subunit B</fullName>
    </alternativeName>
</protein>
<keyword id="KW-0067">ATP-binding</keyword>
<keyword id="KW-0963">Cytoplasm</keyword>
<keyword id="KW-0227">DNA damage</keyword>
<keyword id="KW-0228">DNA excision</keyword>
<keyword id="KW-0234">DNA repair</keyword>
<keyword id="KW-0267">Excision nuclease</keyword>
<keyword id="KW-0347">Helicase</keyword>
<keyword id="KW-0378">Hydrolase</keyword>
<keyword id="KW-0547">Nucleotide-binding</keyword>
<keyword id="KW-0742">SOS response</keyword>
<evidence type="ECO:0000255" key="1">
    <source>
        <dbReference type="HAMAP-Rule" id="MF_00204"/>
    </source>
</evidence>
<comment type="function">
    <text evidence="1">The UvrABC repair system catalyzes the recognition and processing of DNA lesions. A damage recognition complex composed of 2 UvrA and 2 UvrB subunits scans DNA for abnormalities. Upon binding of the UvrA(2)B(2) complex to a putative damaged site, the DNA wraps around one UvrB monomer. DNA wrap is dependent on ATP binding by UvrB and probably causes local melting of the DNA helix, facilitating insertion of UvrB beta-hairpin between the DNA strands. Then UvrB probes one DNA strand for the presence of a lesion. If a lesion is found the UvrA subunits dissociate and the UvrB-DNA preincision complex is formed. This complex is subsequently bound by UvrC and the second UvrB is released. If no lesion is found, the DNA wraps around the other UvrB subunit that will check the other stand for damage.</text>
</comment>
<comment type="subunit">
    <text evidence="1">Forms a heterotetramer with UvrA during the search for lesions. Interacts with UvrC in an incision complex.</text>
</comment>
<comment type="subcellular location">
    <subcellularLocation>
        <location evidence="1">Cytoplasm</location>
    </subcellularLocation>
</comment>
<comment type="domain">
    <text evidence="1">The beta-hairpin motif is involved in DNA binding.</text>
</comment>
<comment type="similarity">
    <text evidence="1">Belongs to the UvrB family.</text>
</comment>
<name>UVRB_PSECP</name>
<dbReference type="EMBL" id="CP001341">
    <property type="protein sequence ID" value="ACL39786.1"/>
    <property type="molecule type" value="Genomic_DNA"/>
</dbReference>
<dbReference type="RefSeq" id="WP_015937006.1">
    <property type="nucleotide sequence ID" value="NC_011886.1"/>
</dbReference>
<dbReference type="SMR" id="B8H7K6"/>
<dbReference type="STRING" id="452863.Achl_1810"/>
<dbReference type="KEGG" id="ach:Achl_1810"/>
<dbReference type="eggNOG" id="COG0556">
    <property type="taxonomic scope" value="Bacteria"/>
</dbReference>
<dbReference type="HOGENOM" id="CLU_009621_2_1_11"/>
<dbReference type="OrthoDB" id="9806651at2"/>
<dbReference type="Proteomes" id="UP000002505">
    <property type="component" value="Chromosome"/>
</dbReference>
<dbReference type="GO" id="GO:0005737">
    <property type="term" value="C:cytoplasm"/>
    <property type="evidence" value="ECO:0007669"/>
    <property type="project" value="UniProtKB-SubCell"/>
</dbReference>
<dbReference type="GO" id="GO:0009380">
    <property type="term" value="C:excinuclease repair complex"/>
    <property type="evidence" value="ECO:0007669"/>
    <property type="project" value="InterPro"/>
</dbReference>
<dbReference type="GO" id="GO:0005524">
    <property type="term" value="F:ATP binding"/>
    <property type="evidence" value="ECO:0007669"/>
    <property type="project" value="UniProtKB-UniRule"/>
</dbReference>
<dbReference type="GO" id="GO:0016887">
    <property type="term" value="F:ATP hydrolysis activity"/>
    <property type="evidence" value="ECO:0007669"/>
    <property type="project" value="InterPro"/>
</dbReference>
<dbReference type="GO" id="GO:0003677">
    <property type="term" value="F:DNA binding"/>
    <property type="evidence" value="ECO:0007669"/>
    <property type="project" value="UniProtKB-UniRule"/>
</dbReference>
<dbReference type="GO" id="GO:0009381">
    <property type="term" value="F:excinuclease ABC activity"/>
    <property type="evidence" value="ECO:0007669"/>
    <property type="project" value="UniProtKB-UniRule"/>
</dbReference>
<dbReference type="GO" id="GO:0004386">
    <property type="term" value="F:helicase activity"/>
    <property type="evidence" value="ECO:0007669"/>
    <property type="project" value="UniProtKB-KW"/>
</dbReference>
<dbReference type="GO" id="GO:0006289">
    <property type="term" value="P:nucleotide-excision repair"/>
    <property type="evidence" value="ECO:0007669"/>
    <property type="project" value="UniProtKB-UniRule"/>
</dbReference>
<dbReference type="GO" id="GO:0009432">
    <property type="term" value="P:SOS response"/>
    <property type="evidence" value="ECO:0007669"/>
    <property type="project" value="UniProtKB-UniRule"/>
</dbReference>
<dbReference type="CDD" id="cd17916">
    <property type="entry name" value="DEXHc_UvrB"/>
    <property type="match status" value="1"/>
</dbReference>
<dbReference type="CDD" id="cd18790">
    <property type="entry name" value="SF2_C_UvrB"/>
    <property type="match status" value="1"/>
</dbReference>
<dbReference type="Gene3D" id="3.40.50.300">
    <property type="entry name" value="P-loop containing nucleotide triphosphate hydrolases"/>
    <property type="match status" value="3"/>
</dbReference>
<dbReference type="Gene3D" id="4.10.860.10">
    <property type="entry name" value="UVR domain"/>
    <property type="match status" value="1"/>
</dbReference>
<dbReference type="HAMAP" id="MF_00204">
    <property type="entry name" value="UvrB"/>
    <property type="match status" value="1"/>
</dbReference>
<dbReference type="InterPro" id="IPR006935">
    <property type="entry name" value="Helicase/UvrB_N"/>
</dbReference>
<dbReference type="InterPro" id="IPR014001">
    <property type="entry name" value="Helicase_ATP-bd"/>
</dbReference>
<dbReference type="InterPro" id="IPR001650">
    <property type="entry name" value="Helicase_C-like"/>
</dbReference>
<dbReference type="InterPro" id="IPR027417">
    <property type="entry name" value="P-loop_NTPase"/>
</dbReference>
<dbReference type="InterPro" id="IPR001943">
    <property type="entry name" value="UVR_dom"/>
</dbReference>
<dbReference type="InterPro" id="IPR036876">
    <property type="entry name" value="UVR_dom_sf"/>
</dbReference>
<dbReference type="InterPro" id="IPR004807">
    <property type="entry name" value="UvrB"/>
</dbReference>
<dbReference type="InterPro" id="IPR041471">
    <property type="entry name" value="UvrB_inter"/>
</dbReference>
<dbReference type="InterPro" id="IPR024759">
    <property type="entry name" value="UvrB_YAD/RRR_dom"/>
</dbReference>
<dbReference type="NCBIfam" id="NF003673">
    <property type="entry name" value="PRK05298.1"/>
    <property type="match status" value="1"/>
</dbReference>
<dbReference type="NCBIfam" id="TIGR00631">
    <property type="entry name" value="uvrb"/>
    <property type="match status" value="1"/>
</dbReference>
<dbReference type="PANTHER" id="PTHR24029">
    <property type="entry name" value="UVRABC SYSTEM PROTEIN B"/>
    <property type="match status" value="1"/>
</dbReference>
<dbReference type="PANTHER" id="PTHR24029:SF0">
    <property type="entry name" value="UVRABC SYSTEM PROTEIN B"/>
    <property type="match status" value="1"/>
</dbReference>
<dbReference type="Pfam" id="PF00271">
    <property type="entry name" value="Helicase_C"/>
    <property type="match status" value="1"/>
</dbReference>
<dbReference type="Pfam" id="PF04851">
    <property type="entry name" value="ResIII"/>
    <property type="match status" value="1"/>
</dbReference>
<dbReference type="Pfam" id="PF02151">
    <property type="entry name" value="UVR"/>
    <property type="match status" value="1"/>
</dbReference>
<dbReference type="Pfam" id="PF12344">
    <property type="entry name" value="UvrB"/>
    <property type="match status" value="1"/>
</dbReference>
<dbReference type="Pfam" id="PF17757">
    <property type="entry name" value="UvrB_inter"/>
    <property type="match status" value="1"/>
</dbReference>
<dbReference type="SMART" id="SM00487">
    <property type="entry name" value="DEXDc"/>
    <property type="match status" value="1"/>
</dbReference>
<dbReference type="SMART" id="SM00490">
    <property type="entry name" value="HELICc"/>
    <property type="match status" value="1"/>
</dbReference>
<dbReference type="SUPFAM" id="SSF46600">
    <property type="entry name" value="C-terminal UvrC-binding domain of UvrB"/>
    <property type="match status" value="1"/>
</dbReference>
<dbReference type="SUPFAM" id="SSF52540">
    <property type="entry name" value="P-loop containing nucleoside triphosphate hydrolases"/>
    <property type="match status" value="2"/>
</dbReference>
<dbReference type="PROSITE" id="PS51192">
    <property type="entry name" value="HELICASE_ATP_BIND_1"/>
    <property type="match status" value="1"/>
</dbReference>
<dbReference type="PROSITE" id="PS51194">
    <property type="entry name" value="HELICASE_CTER"/>
    <property type="match status" value="1"/>
</dbReference>
<dbReference type="PROSITE" id="PS50151">
    <property type="entry name" value="UVR"/>
    <property type="match status" value="1"/>
</dbReference>
<sequence length="704" mass="78987">MSLAQDINRVVAPFEVISEFKPAGDQPAAIADLTERINNGEKDVVLLGATGTGKSATTAWLIEQVQRPTLVMVQNKTLAAQLANEFRELLPNNAVEYFVSYYDYYQPEAYVAQTDTFIEKDSSINEEVERLRHSATNALLTRRDVVVVATVSCIYGLGTPEEYIAGMVTLRKGAEMNRDDLLRKFVSMQYARNDMDFHRGTFRVRGDTVEIIPMYEELAIRIEFFGDEIENIQTLHPLTGQIIQDEEEMYVFPASHYVAGPERMSRAIKRIEDELAERLQVLESQNKLVEAQRLRMRTTYDLEMMQQMGFCNGIENYSSHIDGRARGTAPHCLLDYFPDDFLLVIDESHVTVPQIGAMYEGDMSRKRNLVDFGFRLPSAMDNRPLKWDEFLERVGQTVYLSATPGKYELGKADGFVQQIIRPTGLIDPEVVVKPTKGQIDDLLGEIRTRTERNERVLVTTLTKRMAEDLTDYLLGHGVKVEYLHSDVDTLRRVELLRELRMGTFDVLVGINLLREGLDLPEVSLVSILDADKEGFLRSSTSLIQTIGRAARNVSGQVHMYADRITDSMAQAIDETNRRRAIQVAYNTEHGIDPQPLRKKIADITDQLAKEDADTDALLGSFDYGKGKRGITGANKPGAKKAAAQVRADGLAAAPAEDLVGMIAQLTEQMHGAAAELQFEVAARIRDEVSELKKELRQMQAAGHA</sequence>
<gene>
    <name evidence="1" type="primary">uvrB</name>
    <name type="ordered locus">Achl_1810</name>
</gene>
<organism>
    <name type="scientific">Pseudarthrobacter chlorophenolicus (strain ATCC 700700 / DSM 12829 / CIP 107037 / JCM 12360 / KCTC 9906 / NCIMB 13794 / A6)</name>
    <name type="common">Arthrobacter chlorophenolicus</name>
    <dbReference type="NCBI Taxonomy" id="452863"/>
    <lineage>
        <taxon>Bacteria</taxon>
        <taxon>Bacillati</taxon>
        <taxon>Actinomycetota</taxon>
        <taxon>Actinomycetes</taxon>
        <taxon>Micrococcales</taxon>
        <taxon>Micrococcaceae</taxon>
        <taxon>Pseudarthrobacter</taxon>
    </lineage>
</organism>
<feature type="chain" id="PRO_1000200531" description="UvrABC system protein B">
    <location>
        <begin position="1"/>
        <end position="704"/>
    </location>
</feature>
<feature type="domain" description="Helicase ATP-binding" evidence="1">
    <location>
        <begin position="35"/>
        <end position="188"/>
    </location>
</feature>
<feature type="domain" description="Helicase C-terminal" evidence="1">
    <location>
        <begin position="438"/>
        <end position="604"/>
    </location>
</feature>
<feature type="domain" description="UVR" evidence="1">
    <location>
        <begin position="659"/>
        <end position="694"/>
    </location>
</feature>
<feature type="short sequence motif" description="Beta-hairpin">
    <location>
        <begin position="101"/>
        <end position="124"/>
    </location>
</feature>
<feature type="binding site" evidence="1">
    <location>
        <begin position="48"/>
        <end position="55"/>
    </location>
    <ligand>
        <name>ATP</name>
        <dbReference type="ChEBI" id="CHEBI:30616"/>
    </ligand>
</feature>
<accession>B8H7K6</accession>
<proteinExistence type="inferred from homology"/>